<accession>C4LAE6</accession>
<gene>
    <name evidence="1" type="primary">glyA</name>
    <name type="ordered locus">Tola_2527</name>
</gene>
<evidence type="ECO:0000255" key="1">
    <source>
        <dbReference type="HAMAP-Rule" id="MF_00051"/>
    </source>
</evidence>
<organism>
    <name type="scientific">Tolumonas auensis (strain DSM 9187 / NBRC 110442 / TA 4)</name>
    <dbReference type="NCBI Taxonomy" id="595494"/>
    <lineage>
        <taxon>Bacteria</taxon>
        <taxon>Pseudomonadati</taxon>
        <taxon>Pseudomonadota</taxon>
        <taxon>Gammaproteobacteria</taxon>
        <taxon>Aeromonadales</taxon>
        <taxon>Aeromonadaceae</taxon>
        <taxon>Tolumonas</taxon>
    </lineage>
</organism>
<dbReference type="EC" id="2.1.2.1" evidence="1"/>
<dbReference type="EMBL" id="CP001616">
    <property type="protein sequence ID" value="ACQ94121.1"/>
    <property type="molecule type" value="Genomic_DNA"/>
</dbReference>
<dbReference type="RefSeq" id="WP_015879570.1">
    <property type="nucleotide sequence ID" value="NC_012691.1"/>
</dbReference>
<dbReference type="SMR" id="C4LAE6"/>
<dbReference type="STRING" id="595494.Tola_2527"/>
<dbReference type="KEGG" id="tau:Tola_2527"/>
<dbReference type="eggNOG" id="COG0112">
    <property type="taxonomic scope" value="Bacteria"/>
</dbReference>
<dbReference type="HOGENOM" id="CLU_022477_2_1_6"/>
<dbReference type="OrthoDB" id="9803846at2"/>
<dbReference type="UniPathway" id="UPA00193"/>
<dbReference type="UniPathway" id="UPA00288">
    <property type="reaction ID" value="UER01023"/>
</dbReference>
<dbReference type="Proteomes" id="UP000009073">
    <property type="component" value="Chromosome"/>
</dbReference>
<dbReference type="GO" id="GO:0005829">
    <property type="term" value="C:cytosol"/>
    <property type="evidence" value="ECO:0007669"/>
    <property type="project" value="TreeGrafter"/>
</dbReference>
<dbReference type="GO" id="GO:0004372">
    <property type="term" value="F:glycine hydroxymethyltransferase activity"/>
    <property type="evidence" value="ECO:0007669"/>
    <property type="project" value="UniProtKB-UniRule"/>
</dbReference>
<dbReference type="GO" id="GO:0030170">
    <property type="term" value="F:pyridoxal phosphate binding"/>
    <property type="evidence" value="ECO:0007669"/>
    <property type="project" value="UniProtKB-UniRule"/>
</dbReference>
<dbReference type="GO" id="GO:0019264">
    <property type="term" value="P:glycine biosynthetic process from serine"/>
    <property type="evidence" value="ECO:0007669"/>
    <property type="project" value="UniProtKB-UniRule"/>
</dbReference>
<dbReference type="GO" id="GO:0035999">
    <property type="term" value="P:tetrahydrofolate interconversion"/>
    <property type="evidence" value="ECO:0007669"/>
    <property type="project" value="UniProtKB-UniRule"/>
</dbReference>
<dbReference type="CDD" id="cd00378">
    <property type="entry name" value="SHMT"/>
    <property type="match status" value="1"/>
</dbReference>
<dbReference type="FunFam" id="3.40.640.10:FF:000001">
    <property type="entry name" value="Serine hydroxymethyltransferase"/>
    <property type="match status" value="1"/>
</dbReference>
<dbReference type="FunFam" id="3.90.1150.10:FF:000003">
    <property type="entry name" value="Serine hydroxymethyltransferase"/>
    <property type="match status" value="1"/>
</dbReference>
<dbReference type="Gene3D" id="3.90.1150.10">
    <property type="entry name" value="Aspartate Aminotransferase, domain 1"/>
    <property type="match status" value="1"/>
</dbReference>
<dbReference type="Gene3D" id="3.40.640.10">
    <property type="entry name" value="Type I PLP-dependent aspartate aminotransferase-like (Major domain)"/>
    <property type="match status" value="1"/>
</dbReference>
<dbReference type="HAMAP" id="MF_00051">
    <property type="entry name" value="SHMT"/>
    <property type="match status" value="1"/>
</dbReference>
<dbReference type="InterPro" id="IPR015424">
    <property type="entry name" value="PyrdxlP-dep_Trfase"/>
</dbReference>
<dbReference type="InterPro" id="IPR015421">
    <property type="entry name" value="PyrdxlP-dep_Trfase_major"/>
</dbReference>
<dbReference type="InterPro" id="IPR015422">
    <property type="entry name" value="PyrdxlP-dep_Trfase_small"/>
</dbReference>
<dbReference type="InterPro" id="IPR001085">
    <property type="entry name" value="Ser_HO-MeTrfase"/>
</dbReference>
<dbReference type="InterPro" id="IPR049943">
    <property type="entry name" value="Ser_HO-MeTrfase-like"/>
</dbReference>
<dbReference type="InterPro" id="IPR019798">
    <property type="entry name" value="Ser_HO-MeTrfase_PLP_BS"/>
</dbReference>
<dbReference type="InterPro" id="IPR039429">
    <property type="entry name" value="SHMT-like_dom"/>
</dbReference>
<dbReference type="NCBIfam" id="NF000586">
    <property type="entry name" value="PRK00011.1"/>
    <property type="match status" value="1"/>
</dbReference>
<dbReference type="PANTHER" id="PTHR11680">
    <property type="entry name" value="SERINE HYDROXYMETHYLTRANSFERASE"/>
    <property type="match status" value="1"/>
</dbReference>
<dbReference type="PANTHER" id="PTHR11680:SF50">
    <property type="entry name" value="SERINE HYDROXYMETHYLTRANSFERASE"/>
    <property type="match status" value="1"/>
</dbReference>
<dbReference type="Pfam" id="PF00464">
    <property type="entry name" value="SHMT"/>
    <property type="match status" value="1"/>
</dbReference>
<dbReference type="PIRSF" id="PIRSF000412">
    <property type="entry name" value="SHMT"/>
    <property type="match status" value="1"/>
</dbReference>
<dbReference type="SUPFAM" id="SSF53383">
    <property type="entry name" value="PLP-dependent transferases"/>
    <property type="match status" value="1"/>
</dbReference>
<dbReference type="PROSITE" id="PS00096">
    <property type="entry name" value="SHMT"/>
    <property type="match status" value="1"/>
</dbReference>
<name>GLYA_TOLAT</name>
<comment type="function">
    <text evidence="1">Catalyzes the reversible interconversion of serine and glycine with tetrahydrofolate (THF) serving as the one-carbon carrier. This reaction serves as the major source of one-carbon groups required for the biosynthesis of purines, thymidylate, methionine, and other important biomolecules. Also exhibits THF-independent aldolase activity toward beta-hydroxyamino acids, producing glycine and aldehydes, via a retro-aldol mechanism.</text>
</comment>
<comment type="catalytic activity">
    <reaction evidence="1">
        <text>(6R)-5,10-methylene-5,6,7,8-tetrahydrofolate + glycine + H2O = (6S)-5,6,7,8-tetrahydrofolate + L-serine</text>
        <dbReference type="Rhea" id="RHEA:15481"/>
        <dbReference type="ChEBI" id="CHEBI:15377"/>
        <dbReference type="ChEBI" id="CHEBI:15636"/>
        <dbReference type="ChEBI" id="CHEBI:33384"/>
        <dbReference type="ChEBI" id="CHEBI:57305"/>
        <dbReference type="ChEBI" id="CHEBI:57453"/>
        <dbReference type="EC" id="2.1.2.1"/>
    </reaction>
</comment>
<comment type="cofactor">
    <cofactor evidence="1">
        <name>pyridoxal 5'-phosphate</name>
        <dbReference type="ChEBI" id="CHEBI:597326"/>
    </cofactor>
</comment>
<comment type="pathway">
    <text evidence="1">One-carbon metabolism; tetrahydrofolate interconversion.</text>
</comment>
<comment type="pathway">
    <text evidence="1">Amino-acid biosynthesis; glycine biosynthesis; glycine from L-serine: step 1/1.</text>
</comment>
<comment type="subunit">
    <text evidence="1">Homodimer.</text>
</comment>
<comment type="subcellular location">
    <subcellularLocation>
        <location evidence="1">Cytoplasm</location>
    </subcellularLocation>
</comment>
<comment type="similarity">
    <text evidence="1">Belongs to the SHMT family.</text>
</comment>
<keyword id="KW-0028">Amino-acid biosynthesis</keyword>
<keyword id="KW-0963">Cytoplasm</keyword>
<keyword id="KW-0554">One-carbon metabolism</keyword>
<keyword id="KW-0663">Pyridoxal phosphate</keyword>
<keyword id="KW-1185">Reference proteome</keyword>
<keyword id="KW-0808">Transferase</keyword>
<protein>
    <recommendedName>
        <fullName evidence="1">Serine hydroxymethyltransferase</fullName>
        <shortName evidence="1">SHMT</shortName>
        <shortName evidence="1">Serine methylase</shortName>
        <ecNumber evidence="1">2.1.2.1</ecNumber>
    </recommendedName>
</protein>
<sequence length="417" mass="45261">MLKRDMNIADYDPELWASIVEETQRQEEHIELIASENYTSPRVMQAQGSQLTNKYAEGYPGKRYYGGCEFVDKTETLAIERAKALFGAVYANVQPHSGSQANAAVYMALLKPGDTVLGMNLAHGGHLTHGSPVNFSGKLYNIVPYGIDASGKIDYVELERLALEHKPKMVLGGFSAYSGVVDWAKMREIADKVGAYLFVDMAHVAGLVAAGVYPNPVPHAHVVTSTTHKTLAGPRGGLILSAVNDEELHKKLNSAVFPGTQGGPLMHVIAGKAVAFKEAMEPEFKAYQQQVVKNSKAMVEVFLARGYKIVSGGTENHLFLVDFTDRELTGKEADAALGLANITVNKNSVPNDPRSPFVTSGIRIGSPSITRRGFKEAEAKELAGWICDVLDNRTDEAVIAATRAKVLDICKRLPVYA</sequence>
<reference key="1">
    <citation type="submission" date="2009-05" db="EMBL/GenBank/DDBJ databases">
        <title>Complete sequence of Tolumonas auensis DSM 9187.</title>
        <authorList>
            <consortium name="US DOE Joint Genome Institute"/>
            <person name="Lucas S."/>
            <person name="Copeland A."/>
            <person name="Lapidus A."/>
            <person name="Glavina del Rio T."/>
            <person name="Tice H."/>
            <person name="Bruce D."/>
            <person name="Goodwin L."/>
            <person name="Pitluck S."/>
            <person name="Chertkov O."/>
            <person name="Brettin T."/>
            <person name="Detter J.C."/>
            <person name="Han C."/>
            <person name="Larimer F."/>
            <person name="Land M."/>
            <person name="Hauser L."/>
            <person name="Kyrpides N."/>
            <person name="Mikhailova N."/>
            <person name="Spring S."/>
            <person name="Beller H."/>
        </authorList>
    </citation>
    <scope>NUCLEOTIDE SEQUENCE [LARGE SCALE GENOMIC DNA]</scope>
    <source>
        <strain>DSM 9187 / NBRC 110442 / TA 4</strain>
    </source>
</reference>
<feature type="chain" id="PRO_1000202279" description="Serine hydroxymethyltransferase">
    <location>
        <begin position="1"/>
        <end position="417"/>
    </location>
</feature>
<feature type="binding site" evidence="1">
    <location>
        <position position="121"/>
    </location>
    <ligand>
        <name>(6S)-5,6,7,8-tetrahydrofolate</name>
        <dbReference type="ChEBI" id="CHEBI:57453"/>
    </ligand>
</feature>
<feature type="binding site" evidence="1">
    <location>
        <begin position="125"/>
        <end position="127"/>
    </location>
    <ligand>
        <name>(6S)-5,6,7,8-tetrahydrofolate</name>
        <dbReference type="ChEBI" id="CHEBI:57453"/>
    </ligand>
</feature>
<feature type="binding site" evidence="1">
    <location>
        <begin position="355"/>
        <end position="357"/>
    </location>
    <ligand>
        <name>(6S)-5,6,7,8-tetrahydrofolate</name>
        <dbReference type="ChEBI" id="CHEBI:57453"/>
    </ligand>
</feature>
<feature type="site" description="Plays an important role in substrate specificity" evidence="1">
    <location>
        <position position="228"/>
    </location>
</feature>
<feature type="modified residue" description="N6-(pyridoxal phosphate)lysine" evidence="1">
    <location>
        <position position="229"/>
    </location>
</feature>
<proteinExistence type="inferred from homology"/>